<evidence type="ECO:0000250" key="1"/>
<evidence type="ECO:0000250" key="2">
    <source>
        <dbReference type="UniProtKB" id="P56645"/>
    </source>
</evidence>
<evidence type="ECO:0000255" key="3">
    <source>
        <dbReference type="PROSITE-ProRule" id="PRU00140"/>
    </source>
</evidence>
<evidence type="ECO:0000256" key="4">
    <source>
        <dbReference type="SAM" id="MobiDB-lite"/>
    </source>
</evidence>
<evidence type="ECO:0000269" key="5">
    <source>
    </source>
</evidence>
<evidence type="ECO:0000269" key="6">
    <source>
    </source>
</evidence>
<evidence type="ECO:0000269" key="7">
    <source>
    </source>
</evidence>
<evidence type="ECO:0000269" key="8">
    <source>
    </source>
</evidence>
<evidence type="ECO:0000269" key="9">
    <source>
    </source>
</evidence>
<evidence type="ECO:0000269" key="10">
    <source>
    </source>
</evidence>
<evidence type="ECO:0000269" key="11">
    <source>
    </source>
</evidence>
<evidence type="ECO:0000269" key="12">
    <source>
    </source>
</evidence>
<evidence type="ECO:0000269" key="13">
    <source>
    </source>
</evidence>
<evidence type="ECO:0000269" key="14">
    <source>
    </source>
</evidence>
<evidence type="ECO:0000269" key="15">
    <source>
    </source>
</evidence>
<evidence type="ECO:0000305" key="16"/>
<evidence type="ECO:0007829" key="17">
    <source>
        <dbReference type="PDB" id="4DJ3"/>
    </source>
</evidence>
<comment type="function">
    <text evidence="6 12 13">Originally described as a core component of the circadian clock. The circadian clock, an internal time-keeping system, regulates various physiological processes through the generation of approximately 24 hour circadian rhythms in gene expression, which are translated into rhythms in metabolism and behavior. It is derived from the Latin roots 'circa' (about) and 'diem' (day) and acts as an important regulator of a wide array of physiological functions including metabolism, sleep, body temperature, blood pressure, endocrine, immune, cardiovascular, and renal function. Consists of two major components: the central clock, residing in the suprachiasmatic nucleus (SCN) of the brain, and the peripheral clocks that are present in nearly every tissue and organ system. Both the central and peripheral clocks can be reset by environmental cues, also known as Zeitgebers (German for 'timegivers'). The predominant Zeitgeber for the central clock is light, which is sensed by retina and signals directly to the SCN. The central clock entrains the peripheral clocks through neuronal and hormonal signals, body temperature and feeding-related cues, aligning all clocks with the external light/dark cycle. Circadian rhythms allow an organism to achieve temporal homeostasis with its environment at the molecular level by regulating gene expression to create a peak of protein expression once every 24 hours to control when a particular physiological process is most active with respect to the solar day. Transcription and translation of core clock components (CLOCK, NPAS2, BMAL1, BMAL2, PER1, PER2, PER3, CRY1 and CRY2) plays a critical role in rhythm generation, whereas delays imposed by post-translational modifications (PTMs) are important for determining the period (tau) of the rhythms (tau refers to the period of a rhythm and is the length, in time, of one complete cycle). A diurnal rhythm is synchronized with the day/night cycle, while the ultradian and infradian rhythms have a period shorter and longer than 24 hours, respectively. Disruptions in the circadian rhythms contribute to the pathology of cardiovascular diseases, cancer, metabolic syndromes and aging. A transcription/translation feedback loop (TTFL) forms the core of the molecular circadian clock mechanism. Transcription factors, CLOCK or NPAS2 and BMAL1 or BMAL2, form the positive limb of the feedback loop, act in the form of a heterodimer and activate the transcription of core clock genes and clock-controlled genes (involved in key metabolic processes), harboring E-box elements (5'-CACGTG-3') within their promoters. The core clock genes: PER1/2/3 and CRY1/2 which are transcriptional repressors form the negative limb of the feedback loop and interact with the CLOCK|NPAS2-BMAL1|BMAL2 heterodimer inhibiting its activity and thereby negatively regulating their own expression. This heterodimer also activates nuclear receptors NR1D1, NR1D2, RORA, RORB and RORG, which form a second feedback loop and which activate and repress BMAL1 transcription, respectively. Has a redundant role with the other PER proteins PER1 and PER2 and is not essential for the circadian rhythms maintenance. In contrast, plays an important role in sleep-wake timing and sleep homeostasis probably through the transcriptional regulation of sleep homeostasis-related genes, without influencing circadian parameters. Can bind heme.</text>
</comment>
<comment type="subunit">
    <text evidence="5 8 9 10 11 13">Homodimer. Component of the circadian core oscillator, which includes the CRY proteins, CLOCK or NPAS2, BMAL1 or BMAL2, CSNK1D and/or CSNK1E, TIMELESS and the PER proteins. Interacts directly with PER1, PER2, CRY1, CRY2, and TIMELESS; interaction with CRY1 and CRY2 is weak and not rhythmic. Interacts with FBXW11 and BTRC.</text>
</comment>
<comment type="subcellular location">
    <subcellularLocation>
        <location evidence="5 7 8 10">Cytoplasm</location>
    </subcellularLocation>
    <subcellularLocation>
        <location evidence="5 7 8 10">Nucleus</location>
    </subcellularLocation>
    <text evidence="5 7 8 10">Mainly cytoplasmic. Translocates to the nucleus through binding PER1, PER2, CRY1 or CRY2, but not TIMELESS.</text>
</comment>
<comment type="tissue specificity">
    <text evidence="10 15">Widely expressed. Expressed in heart, brain, lung, liver, skeletal muscle, testis, and at low level in the spleen and kidney. In brain, mainly found in the SCN, hippocampus, piriform cortex, and cerebellum. Lower level of expression in the neocortex. Expression exhibits synchronous oscillations in liver, skeletal muscle and testis.</text>
</comment>
<comment type="induction">
    <text evidence="9 10 15">Exhibits circadian oscillation expression in SCN, liver, skeletal muscle, testis and eyes. In the SCN, highest levels during subjective day at CT6 and CT9, lowest levels at night, CT15, CT18 and CT 21. In the liver, skeletal muscle, testis and eyes highest levels at CT15, CT15-CT18, CT9 and CT15, and CT9-CT15, respectively. During subjective night, unresponsive to light exposure.</text>
</comment>
<comment type="PTM">
    <text evidence="8 10">Phosphorylation by CSNK1E is weak and appears to require association with PER1 and translocation to the nucleus.</text>
</comment>
<comment type="PTM">
    <text evidence="8">Ubiquitinated.</text>
</comment>
<comment type="disruption phenotype">
    <text evidence="6 12 14">Animals show altered sleep and behavioral activity whitout changes in total activity or vigilance states. They have increased wheel-running activity and reduced REM (rapid eye movement) sleep and NREM (non-REM) sleep in the middle of the dark phase. At the beginning of the baseline light period, they have less wakefulness and more REM and NREM sleep. Mice spend less time in wakefulness and more time in NREM sleep on the light period immediately after sleep deprivation and REM sleep accumulates more slowly during the recovery dark phase. They also display a depression-like phenotype. Double knocknouts for PER2 and PER3 show the same phenotype as PER2 knockouts with severely disrupted circadian behavior.</text>
</comment>
<proteinExistence type="evidence at protein level"/>
<feature type="chain" id="PRO_0000162634" description="Period circadian protein homolog 3">
    <location>
        <begin position="1"/>
        <end position="1113"/>
    </location>
</feature>
<feature type="domain" description="PAS 1" evidence="3">
    <location>
        <begin position="120"/>
        <end position="187"/>
    </location>
</feature>
<feature type="domain" description="PAS 2" evidence="3">
    <location>
        <begin position="258"/>
        <end position="324"/>
    </location>
</feature>
<feature type="domain" description="PAC">
    <location>
        <begin position="333"/>
        <end position="376"/>
    </location>
</feature>
<feature type="region of interest" description="Disordered" evidence="4">
    <location>
        <begin position="1"/>
        <end position="48"/>
    </location>
</feature>
<feature type="region of interest" description="Disordered" evidence="4">
    <location>
        <begin position="418"/>
        <end position="451"/>
    </location>
</feature>
<feature type="region of interest" description="Disordered" evidence="4">
    <location>
        <begin position="485"/>
        <end position="530"/>
    </location>
</feature>
<feature type="region of interest" description="CSNK1E binding domain">
    <location>
        <begin position="551"/>
        <end position="750"/>
    </location>
</feature>
<feature type="region of interest" description="Disordered" evidence="4">
    <location>
        <begin position="561"/>
        <end position="580"/>
    </location>
</feature>
<feature type="region of interest" description="Disordered" evidence="4">
    <location>
        <begin position="718"/>
        <end position="742"/>
    </location>
</feature>
<feature type="region of interest" description="Disordered" evidence="4">
    <location>
        <begin position="871"/>
        <end position="906"/>
    </location>
</feature>
<feature type="region of interest" description="Disordered" evidence="4">
    <location>
        <begin position="921"/>
        <end position="1010"/>
    </location>
</feature>
<feature type="region of interest" description="CRY binding domain" evidence="1">
    <location>
        <begin position="1035"/>
        <end position="1113"/>
    </location>
</feature>
<feature type="short sequence motif" description="Nuclear export signal 1" evidence="1">
    <location>
        <begin position="54"/>
        <end position="63"/>
    </location>
</feature>
<feature type="short sequence motif" description="Nuclear export signal 3" evidence="1">
    <location>
        <begin position="399"/>
        <end position="408"/>
    </location>
</feature>
<feature type="short sequence motif" description="Nuclear localization signal" evidence="1">
    <location>
        <begin position="719"/>
        <end position="735"/>
    </location>
</feature>
<feature type="short sequence motif" description="Nuclear export signal 2" evidence="1">
    <location>
        <begin position="913"/>
        <end position="920"/>
    </location>
</feature>
<feature type="compositionally biased region" description="Low complexity" evidence="4">
    <location>
        <begin position="418"/>
        <end position="427"/>
    </location>
</feature>
<feature type="compositionally biased region" description="Polar residues" evidence="4">
    <location>
        <begin position="428"/>
        <end position="441"/>
    </location>
</feature>
<feature type="compositionally biased region" description="Polar residues" evidence="4">
    <location>
        <begin position="501"/>
        <end position="530"/>
    </location>
</feature>
<feature type="compositionally biased region" description="Basic and acidic residues" evidence="4">
    <location>
        <begin position="566"/>
        <end position="580"/>
    </location>
</feature>
<feature type="compositionally biased region" description="Basic and acidic residues" evidence="4">
    <location>
        <begin position="889"/>
        <end position="901"/>
    </location>
</feature>
<feature type="compositionally biased region" description="Low complexity" evidence="4">
    <location>
        <begin position="962"/>
        <end position="986"/>
    </location>
</feature>
<feature type="compositionally biased region" description="Basic and acidic residues" evidence="4">
    <location>
        <begin position="993"/>
        <end position="1007"/>
    </location>
</feature>
<feature type="modified residue" description="Phosphoserine" evidence="2">
    <location>
        <position position="907"/>
    </location>
</feature>
<feature type="mutagenesis site" description="Abolishes homodimerization." evidence="13">
    <original>W</original>
    <variation>E</variation>
    <location>
        <position position="359"/>
    </location>
</feature>
<feature type="mutagenesis site" description="Abolishes homodimerization." evidence="13">
    <original>I</original>
    <variation>E</variation>
    <location>
        <position position="367"/>
    </location>
</feature>
<feature type="mutagenesis site" description="No effect on interaction with BTRC and FBXW11." evidence="11">
    <original>SVASGISQCSCSSTS</original>
    <variation>AVAAGIAQCACAATA</variation>
    <location>
        <begin position="613"/>
        <end position="627"/>
    </location>
</feature>
<feature type="sequence conflict" description="In Ref. 1; AAC40147." evidence="16" ref="1">
    <original>Q</original>
    <variation>H</variation>
    <location>
        <position position="967"/>
    </location>
</feature>
<feature type="sequence conflict" description="In Ref. 1; AAC40147." evidence="16" ref="1">
    <original>H</original>
    <variation>R</variation>
    <location>
        <position position="1107"/>
    </location>
</feature>
<feature type="turn" evidence="17">
    <location>
        <begin position="114"/>
        <end position="118"/>
    </location>
</feature>
<feature type="helix" evidence="17">
    <location>
        <begin position="122"/>
        <end position="125"/>
    </location>
</feature>
<feature type="strand" evidence="17">
    <location>
        <begin position="131"/>
        <end position="137"/>
    </location>
</feature>
<feature type="turn" evidence="17">
    <location>
        <begin position="138"/>
        <end position="140"/>
    </location>
</feature>
<feature type="strand" evidence="17">
    <location>
        <begin position="142"/>
        <end position="146"/>
    </location>
</feature>
<feature type="helix" evidence="17">
    <location>
        <begin position="150"/>
        <end position="153"/>
    </location>
</feature>
<feature type="helix" evidence="17">
    <location>
        <begin position="158"/>
        <end position="162"/>
    </location>
</feature>
<feature type="helix" evidence="17">
    <location>
        <begin position="166"/>
        <end position="169"/>
    </location>
</feature>
<feature type="helix" evidence="17">
    <location>
        <begin position="172"/>
        <end position="174"/>
    </location>
</feature>
<feature type="helix" evidence="17">
    <location>
        <begin position="175"/>
        <end position="181"/>
    </location>
</feature>
<feature type="turn" evidence="17">
    <location>
        <begin position="184"/>
        <end position="186"/>
    </location>
</feature>
<feature type="strand" evidence="17">
    <location>
        <begin position="208"/>
        <end position="212"/>
    </location>
</feature>
<feature type="strand" evidence="17">
    <location>
        <begin position="218"/>
        <end position="220"/>
    </location>
</feature>
<feature type="strand" evidence="17">
    <location>
        <begin position="224"/>
        <end position="234"/>
    </location>
</feature>
<feature type="strand" evidence="17">
    <location>
        <begin position="239"/>
        <end position="241"/>
    </location>
</feature>
<feature type="strand" evidence="17">
    <location>
        <begin position="245"/>
        <end position="253"/>
    </location>
</feature>
<feature type="strand" evidence="17">
    <location>
        <begin position="259"/>
        <end position="261"/>
    </location>
</feature>
<feature type="helix" evidence="17">
    <location>
        <begin position="265"/>
        <end position="267"/>
    </location>
</feature>
<feature type="strand" evidence="17">
    <location>
        <begin position="269"/>
        <end position="274"/>
    </location>
</feature>
<feature type="strand" evidence="17">
    <location>
        <begin position="278"/>
        <end position="283"/>
    </location>
</feature>
<feature type="helix" evidence="17">
    <location>
        <begin position="287"/>
        <end position="291"/>
    </location>
</feature>
<feature type="helix" evidence="17">
    <location>
        <begin position="295"/>
        <end position="298"/>
    </location>
</feature>
<feature type="helix" evidence="17">
    <location>
        <begin position="303"/>
        <end position="306"/>
    </location>
</feature>
<feature type="turn" evidence="17">
    <location>
        <begin position="309"/>
        <end position="313"/>
    </location>
</feature>
<feature type="helix" evidence="17">
    <location>
        <begin position="314"/>
        <end position="324"/>
    </location>
</feature>
<feature type="turn" evidence="17">
    <location>
        <begin position="325"/>
        <end position="327"/>
    </location>
</feature>
<feature type="strand" evidence="17">
    <location>
        <begin position="336"/>
        <end position="339"/>
    </location>
</feature>
<feature type="strand" evidence="17">
    <location>
        <begin position="345"/>
        <end position="356"/>
    </location>
</feature>
<feature type="strand" evidence="17">
    <location>
        <begin position="358"/>
        <end position="360"/>
    </location>
</feature>
<feature type="strand" evidence="17">
    <location>
        <begin position="363"/>
        <end position="372"/>
    </location>
</feature>
<feature type="strand" evidence="17">
    <location>
        <begin position="377"/>
        <end position="379"/>
    </location>
</feature>
<feature type="helix" evidence="17">
    <location>
        <begin position="394"/>
        <end position="406"/>
    </location>
</feature>
<reference key="1">
    <citation type="journal article" date="1998" name="Neuron">
        <title>Three period homologs in mammals: differential light responses in the suprachiasmatic circadian clock and oscillating transcripts outside of brain.</title>
        <authorList>
            <person name="Zylka M.J."/>
            <person name="Shearman L.P."/>
            <person name="Weaver D.R."/>
            <person name="Reppert S.M."/>
        </authorList>
    </citation>
    <scope>NUCLEOTIDE SEQUENCE [MRNA]</scope>
    <scope>TISSUE SPECIFICITY</scope>
    <scope>INDUCTION</scope>
    <source>
        <strain>C57BL/6J</strain>
        <tissue>Brain</tissue>
    </source>
</reference>
<reference key="2">
    <citation type="journal article" date="2009" name="PLoS Biol.">
        <title>Lineage-specific biology revealed by a finished genome assembly of the mouse.</title>
        <authorList>
            <person name="Church D.M."/>
            <person name="Goodstadt L."/>
            <person name="Hillier L.W."/>
            <person name="Zody M.C."/>
            <person name="Goldstein S."/>
            <person name="She X."/>
            <person name="Bult C.J."/>
            <person name="Agarwala R."/>
            <person name="Cherry J.L."/>
            <person name="DiCuccio M."/>
            <person name="Hlavina W."/>
            <person name="Kapustin Y."/>
            <person name="Meric P."/>
            <person name="Maglott D."/>
            <person name="Birtle Z."/>
            <person name="Marques A.C."/>
            <person name="Graves T."/>
            <person name="Zhou S."/>
            <person name="Teague B."/>
            <person name="Potamousis K."/>
            <person name="Churas C."/>
            <person name="Place M."/>
            <person name="Herschleb J."/>
            <person name="Runnheim R."/>
            <person name="Forrest D."/>
            <person name="Amos-Landgraf J."/>
            <person name="Schwartz D.C."/>
            <person name="Cheng Z."/>
            <person name="Lindblad-Toh K."/>
            <person name="Eichler E.E."/>
            <person name="Ponting C.P."/>
        </authorList>
    </citation>
    <scope>NUCLEOTIDE SEQUENCE [LARGE SCALE GENOMIC DNA]</scope>
    <source>
        <strain>C57BL/6J</strain>
    </source>
</reference>
<reference key="3">
    <citation type="journal article" date="1999" name="Cell">
        <title>mCRY1 and mCRY2 are essential components of the negative limb of the circadian clock feedback loop.</title>
        <authorList>
            <person name="Kume K."/>
            <person name="Zylka M.J."/>
            <person name="Sriram S."/>
            <person name="Shearman L.P."/>
            <person name="Weaver D.R."/>
            <person name="Jin X."/>
            <person name="Maywood E.S."/>
            <person name="Hastings M.H."/>
            <person name="Reppert S.M."/>
        </authorList>
    </citation>
    <scope>HOMODIMERIZATION</scope>
    <scope>INTERACTION WITH PER1; PER2; CRY1 AND CRY2</scope>
    <scope>SUBCELLULAR LOCATION</scope>
</reference>
<reference key="4">
    <citation type="journal article" date="2001" name="J. Biol. Chem.">
        <title>Nuclear export of mammalian PERIOD proteins.</title>
        <authorList>
            <person name="Vielhaber E.L."/>
            <person name="Duricka D."/>
            <person name="Ullman K.S."/>
            <person name="Virshup D.M."/>
        </authorList>
    </citation>
    <scope>SUBCELLULAR LOCATION</scope>
    <scope>NUCLEAR EXPORT SIGNAL</scope>
</reference>
<reference key="5">
    <citation type="journal article" date="2001" name="Neuron">
        <title>Differential functions of mPer1, mPer2, and mPer3 in the SCN circadian clock.</title>
        <authorList>
            <person name="Bae K."/>
            <person name="Jin X."/>
            <person name="Maywood E.S."/>
            <person name="Hastings M.H."/>
            <person name="Reppert S.M."/>
            <person name="Weaver D.R."/>
        </authorList>
    </citation>
    <scope>FUNCTION IN CIRCADIAN RHYTHMS</scope>
    <scope>DISRUPTION PHENOTYPE</scope>
</reference>
<reference key="6">
    <citation type="journal article" date="2002" name="Mol. Cell. Biol.">
        <title>Control of intracellular dynamics of mammalian period proteins by casein kinase I epsilon (CKIepsilon) and CKIdelta in cultured cells.</title>
        <authorList>
            <person name="Akashi M."/>
            <person name="Tsuchiya Y."/>
            <person name="Yoshino T."/>
            <person name="Nishida E."/>
        </authorList>
    </citation>
    <scope>INTERACTION WITH CSNK1D AND CSNK1E</scope>
    <scope>PHOSPHORYLATION</scope>
    <scope>UBIQUITINATION</scope>
    <scope>SUBCELLULAR LOCATION</scope>
</reference>
<reference key="7">
    <citation type="journal article" date="2003" name="Science">
        <title>Requirement of mammalian Timeless for circadian rhythmicity.</title>
        <authorList>
            <person name="Barnes J.W."/>
            <person name="Tischkau S.A."/>
            <person name="Barnes J.A."/>
            <person name="Mitchell J.W."/>
            <person name="Burgoon P.W."/>
            <person name="Hickok J.R."/>
            <person name="Gillette M.U."/>
        </authorList>
    </citation>
    <scope>INTERACTION WITH TIMELESS</scope>
    <scope>INDUCTION</scope>
</reference>
<reference key="8">
    <citation type="journal article" date="2004" name="Mol. Cell. Biol.">
        <title>Direct association between mouse PERIOD and CKIepsilon is critical for a functioning circadian clock.</title>
        <authorList>
            <person name="Lee C."/>
            <person name="Weaver D.R."/>
            <person name="Reppert S.M."/>
        </authorList>
    </citation>
    <scope>INTERACTION WITH PER1; PER2; CRY1 AND CRY2</scope>
    <scope>PHOSPHORYLATION</scope>
    <scope>SUBCELLULAR LOCATION</scope>
    <scope>INDUCTION</scope>
    <scope>TISSUE SPECIFICITY</scope>
</reference>
<reference key="9">
    <citation type="journal article" date="2005" name="J. Biol. Chem.">
        <title>SCFbeta-TRCP controls clock-dependent transcription via casein kinase 1-dependent degradation of the mammalian period-1 (Per1) protein.</title>
        <authorList>
            <person name="Shirogane T."/>
            <person name="Jin J."/>
            <person name="Ang X.L."/>
            <person name="Harper J.W."/>
        </authorList>
    </citation>
    <scope>INTERACTION WITH FBXW11 AND BTRC</scope>
    <scope>MUTAGENESIS OF 613-S--S-627</scope>
</reference>
<reference key="10">
    <citation type="journal article" date="2011" name="Am. J. Physiol.">
        <title>Altered sleep and behavioral activity phenotypes in PER3-deficient mice.</title>
        <authorList>
            <person name="Hasan S."/>
            <person name="van der Veen D.R."/>
            <person name="Winsky-Sommerer R."/>
            <person name="Dijk D.J."/>
            <person name="Archer S.N."/>
        </authorList>
    </citation>
    <scope>FUNCTION IN SLEEP HOMEOSTASIS</scope>
    <scope>DISRUPTION PHENOTYPE</scope>
</reference>
<reference key="11">
    <citation type="journal article" date="2016" name="Proc. Natl. Acad. Sci. U.S.A.">
        <title>A PERIOD3 variant causes a circadian phenotype and is associated with a seasonal mood trait.</title>
        <authorList>
            <person name="Zhang L."/>
            <person name="Hirano A."/>
            <person name="Hsu P.K."/>
            <person name="Jones C.R."/>
            <person name="Sakai N."/>
            <person name="Okuro M."/>
            <person name="McMahon T."/>
            <person name="Yamazaki M."/>
            <person name="Xu Y."/>
            <person name="Saigoh N."/>
            <person name="Saigoh K."/>
            <person name="Lin S.T."/>
            <person name="Kaasik K."/>
            <person name="Nishino S."/>
            <person name="Ptacek L.J."/>
            <person name="Fu Y.H."/>
        </authorList>
    </citation>
    <scope>DISRUPTION PHENOTYPE</scope>
</reference>
<reference key="12">
    <citation type="journal article" date="2013" name="Physiol. Rev.">
        <title>Metabolism and the circadian clock converge.</title>
        <authorList>
            <person name="Eckel-Mahan K."/>
            <person name="Sassone-Corsi P."/>
        </authorList>
    </citation>
    <scope>REVIEW</scope>
</reference>
<reference key="13">
    <citation type="journal article" date="2014" name="Trends Cell Biol.">
        <title>Molecular architecture of the mammalian circadian clock.</title>
        <authorList>
            <person name="Partch C.L."/>
            <person name="Green C.B."/>
            <person name="Takahashi J.S."/>
        </authorList>
    </citation>
    <scope>REVIEW</scope>
</reference>
<reference key="14">
    <citation type="journal article" date="2012" name="Proc. Natl. Acad. Sci. U.S.A.">
        <title>Unwinding the differences of the mammalian PERIOD clock proteins from crystal structure to cellular function.</title>
        <authorList>
            <person name="Kucera N."/>
            <person name="Schmalen I."/>
            <person name="Hennig S."/>
            <person name="Ollinger R."/>
            <person name="Strauss H.M."/>
            <person name="Grudziecki A."/>
            <person name="Wieczorek C."/>
            <person name="Kramer A."/>
            <person name="Wolf E."/>
        </authorList>
    </citation>
    <scope>X-RAY CRYSTALLOGRAPHY (2.5 ANGSTROMS) OF 108-411</scope>
    <scope>FUNCTION IN HEME BINDING</scope>
    <scope>SUBUNIT</scope>
    <scope>MUTAGENESIS OF TRP-359 AND ILE-367</scope>
</reference>
<keyword id="KW-0002">3D-structure</keyword>
<keyword id="KW-0090">Biological rhythms</keyword>
<keyword id="KW-0963">Cytoplasm</keyword>
<keyword id="KW-0539">Nucleus</keyword>
<keyword id="KW-0597">Phosphoprotein</keyword>
<keyword id="KW-1185">Reference proteome</keyword>
<keyword id="KW-0677">Repeat</keyword>
<keyword id="KW-0804">Transcription</keyword>
<keyword id="KW-0805">Transcription regulation</keyword>
<keyword id="KW-0832">Ubl conjugation</keyword>
<accession>O70361</accession>
<accession>A2A894</accession>
<dbReference type="EMBL" id="AF050182">
    <property type="protein sequence ID" value="AAC40147.1"/>
    <property type="molecule type" value="mRNA"/>
</dbReference>
<dbReference type="EMBL" id="AL607143">
    <property type="status" value="NOT_ANNOTATED_CDS"/>
    <property type="molecule type" value="Genomic_DNA"/>
</dbReference>
<dbReference type="CCDS" id="CCDS18978.1"/>
<dbReference type="PIR" id="T14260">
    <property type="entry name" value="T14260"/>
</dbReference>
<dbReference type="RefSeq" id="NP_035197.2">
    <property type="nucleotide sequence ID" value="NM_011067.3"/>
</dbReference>
<dbReference type="PDB" id="4DJ3">
    <property type="method" value="X-ray"/>
    <property type="resolution" value="2.50 A"/>
    <property type="chains" value="A/B=108-411"/>
</dbReference>
<dbReference type="PDBsum" id="4DJ3"/>
<dbReference type="SMR" id="O70361"/>
<dbReference type="BioGRID" id="202113">
    <property type="interactions" value="9"/>
</dbReference>
<dbReference type="ComplexPortal" id="CPX-3217">
    <property type="entry name" value="Cry1-Per3 complex"/>
</dbReference>
<dbReference type="ComplexPortal" id="CPX-3218">
    <property type="entry name" value="Cry2-Per3 complex"/>
</dbReference>
<dbReference type="CORUM" id="O70361"/>
<dbReference type="DIP" id="DIP-60820N"/>
<dbReference type="FunCoup" id="O70361">
    <property type="interactions" value="1865"/>
</dbReference>
<dbReference type="IntAct" id="O70361">
    <property type="interactions" value="4"/>
</dbReference>
<dbReference type="STRING" id="10090.ENSMUSP00000099493"/>
<dbReference type="iPTMnet" id="O70361"/>
<dbReference type="PhosphoSitePlus" id="O70361"/>
<dbReference type="PaxDb" id="10090-ENSMUSP00000099493"/>
<dbReference type="ProteomicsDB" id="289348"/>
<dbReference type="Antibodypedia" id="13182">
    <property type="antibodies" value="209 antibodies from 32 providers"/>
</dbReference>
<dbReference type="DNASU" id="18628"/>
<dbReference type="Ensembl" id="ENSMUST00000103204.11">
    <property type="protein sequence ID" value="ENSMUSP00000099493.5"/>
    <property type="gene ID" value="ENSMUSG00000028957.13"/>
</dbReference>
<dbReference type="GeneID" id="18628"/>
<dbReference type="KEGG" id="mmu:18628"/>
<dbReference type="UCSC" id="uc008vye.2">
    <property type="organism name" value="mouse"/>
</dbReference>
<dbReference type="AGR" id="MGI:1277134"/>
<dbReference type="CTD" id="8863"/>
<dbReference type="MGI" id="MGI:1277134">
    <property type="gene designation" value="Per3"/>
</dbReference>
<dbReference type="VEuPathDB" id="HostDB:ENSMUSG00000028957"/>
<dbReference type="eggNOG" id="KOG3753">
    <property type="taxonomic scope" value="Eukaryota"/>
</dbReference>
<dbReference type="GeneTree" id="ENSGT00940000160817"/>
<dbReference type="HOGENOM" id="CLU_006667_0_1_1"/>
<dbReference type="InParanoid" id="O70361"/>
<dbReference type="OMA" id="GISQCSY"/>
<dbReference type="OrthoDB" id="7788983at2759"/>
<dbReference type="PhylomeDB" id="O70361"/>
<dbReference type="TreeFam" id="TF318445"/>
<dbReference type="BioGRID-ORCS" id="18628">
    <property type="hits" value="1 hit in 77 CRISPR screens"/>
</dbReference>
<dbReference type="ChiTaRS" id="Per3">
    <property type="organism name" value="mouse"/>
</dbReference>
<dbReference type="EvolutionaryTrace" id="O70361"/>
<dbReference type="PRO" id="PR:O70361"/>
<dbReference type="Proteomes" id="UP000000589">
    <property type="component" value="Chromosome 4"/>
</dbReference>
<dbReference type="RNAct" id="O70361">
    <property type="molecule type" value="protein"/>
</dbReference>
<dbReference type="Bgee" id="ENSMUSG00000028957">
    <property type="expression patterns" value="Expressed in ciliary body and 214 other cell types or tissues"/>
</dbReference>
<dbReference type="ExpressionAtlas" id="O70361">
    <property type="expression patterns" value="baseline and differential"/>
</dbReference>
<dbReference type="GO" id="GO:0005737">
    <property type="term" value="C:cytoplasm"/>
    <property type="evidence" value="ECO:0000250"/>
    <property type="project" value="UniProtKB"/>
</dbReference>
<dbReference type="GO" id="GO:0005634">
    <property type="term" value="C:nucleus"/>
    <property type="evidence" value="ECO:0000250"/>
    <property type="project" value="UniProtKB"/>
</dbReference>
<dbReference type="GO" id="GO:0019900">
    <property type="term" value="F:kinase binding"/>
    <property type="evidence" value="ECO:0000353"/>
    <property type="project" value="UniProtKB"/>
</dbReference>
<dbReference type="GO" id="GO:0031625">
    <property type="term" value="F:ubiquitin protein ligase binding"/>
    <property type="evidence" value="ECO:0000353"/>
    <property type="project" value="UniProtKB"/>
</dbReference>
<dbReference type="GO" id="GO:0007623">
    <property type="term" value="P:circadian rhythm"/>
    <property type="evidence" value="ECO:0000314"/>
    <property type="project" value="MGI"/>
</dbReference>
<dbReference type="GO" id="GO:0000122">
    <property type="term" value="P:negative regulation of transcription by RNA polymerase II"/>
    <property type="evidence" value="ECO:0000314"/>
    <property type="project" value="MGI"/>
</dbReference>
<dbReference type="GO" id="GO:0050821">
    <property type="term" value="P:protein stabilization"/>
    <property type="evidence" value="ECO:0000250"/>
    <property type="project" value="UniProtKB"/>
</dbReference>
<dbReference type="GO" id="GO:0045187">
    <property type="term" value="P:regulation of circadian sleep/wake cycle, sleep"/>
    <property type="evidence" value="ECO:0000315"/>
    <property type="project" value="UniProtKB"/>
</dbReference>
<dbReference type="CDD" id="cd00130">
    <property type="entry name" value="PAS"/>
    <property type="match status" value="1"/>
</dbReference>
<dbReference type="FunFam" id="3.30.450.20:FF:000013">
    <property type="entry name" value="Period circadian protein homolog 2"/>
    <property type="match status" value="1"/>
</dbReference>
<dbReference type="FunFam" id="3.30.450.20:FF:000004">
    <property type="entry name" value="Period circadian protein homolog 3"/>
    <property type="match status" value="1"/>
</dbReference>
<dbReference type="Gene3D" id="3.30.450.20">
    <property type="entry name" value="PAS domain"/>
    <property type="match status" value="2"/>
</dbReference>
<dbReference type="InterPro" id="IPR000014">
    <property type="entry name" value="PAS"/>
</dbReference>
<dbReference type="InterPro" id="IPR035965">
    <property type="entry name" value="PAS-like_dom_sf"/>
</dbReference>
<dbReference type="InterPro" id="IPR013655">
    <property type="entry name" value="PAS_fold_3"/>
</dbReference>
<dbReference type="InterPro" id="IPR048814">
    <property type="entry name" value="Per1-3_PAS-A"/>
</dbReference>
<dbReference type="InterPro" id="IPR022728">
    <property type="entry name" value="Period_circadian-like_C"/>
</dbReference>
<dbReference type="InterPro" id="IPR050760">
    <property type="entry name" value="Period_circadian_regulator"/>
</dbReference>
<dbReference type="PANTHER" id="PTHR11269">
    <property type="entry name" value="PERIOD CIRCADIAN PROTEIN"/>
    <property type="match status" value="1"/>
</dbReference>
<dbReference type="PANTHER" id="PTHR11269:SF13">
    <property type="entry name" value="PERIOD CIRCADIAN PROTEIN HOMOLOG 3"/>
    <property type="match status" value="1"/>
</dbReference>
<dbReference type="Pfam" id="PF23170">
    <property type="entry name" value="bHLH_PER"/>
    <property type="match status" value="1"/>
</dbReference>
<dbReference type="Pfam" id="PF08447">
    <property type="entry name" value="PAS_3"/>
    <property type="match status" value="1"/>
</dbReference>
<dbReference type="Pfam" id="PF21353">
    <property type="entry name" value="Per3-like_PAS-A"/>
    <property type="match status" value="1"/>
</dbReference>
<dbReference type="Pfam" id="PF12114">
    <property type="entry name" value="Period_C"/>
    <property type="match status" value="1"/>
</dbReference>
<dbReference type="SMART" id="SM00091">
    <property type="entry name" value="PAS"/>
    <property type="match status" value="2"/>
</dbReference>
<dbReference type="SUPFAM" id="SSF55785">
    <property type="entry name" value="PYP-like sensor domain (PAS domain)"/>
    <property type="match status" value="1"/>
</dbReference>
<dbReference type="PROSITE" id="PS50112">
    <property type="entry name" value="PAS"/>
    <property type="match status" value="1"/>
</dbReference>
<organism>
    <name type="scientific">Mus musculus</name>
    <name type="common">Mouse</name>
    <dbReference type="NCBI Taxonomy" id="10090"/>
    <lineage>
        <taxon>Eukaryota</taxon>
        <taxon>Metazoa</taxon>
        <taxon>Chordata</taxon>
        <taxon>Craniata</taxon>
        <taxon>Vertebrata</taxon>
        <taxon>Euteleostomi</taxon>
        <taxon>Mammalia</taxon>
        <taxon>Eutheria</taxon>
        <taxon>Euarchontoglires</taxon>
        <taxon>Glires</taxon>
        <taxon>Rodentia</taxon>
        <taxon>Myomorpha</taxon>
        <taxon>Muroidea</taxon>
        <taxon>Muridae</taxon>
        <taxon>Murinae</taxon>
        <taxon>Mus</taxon>
        <taxon>Mus</taxon>
    </lineage>
</organism>
<sequence length="1113" mass="120911">MDPCGDPAVPGGDCPQTRGPGLQGASGQEGPLQGTCVDSSHSEHEDRNRMSEELIMVVQEMKKYFPAERHTKPSTLDALNYALRCVHSVQANSDFFQSLGPRGAHQADVTVYSLEDLTALASEHTSKNTDTFAAVFSFLSGRLVHISEQAALILNSKRGFLKSVHFVDLLAPQDVRAFYAHTAPTQLPFWNNWTQRASQYECAPAKPFFCRICGGGDREKRHYSPFRILPYLVHVHSSAQPEPEPCCLTLVEKIHSGYEAPRIPVDKRIFTTTHTPGCVFLEVDERAVPLLGYLPQDLIGTSILTYLHPEDRPLMVAIHQKVLKYAGHPPFEHSPVRFCTQNGEYVILDSSWSSFVNPWSRKVSFIIGRHKVRTSPLNEDVFATRIKKAASNDKDIAELQEQIHKLLLQPVHASASSGYGSLGSSGSQEQHVSITSSSESSGHCPEEGQHEQMTLQQVYASVNKIKNVGQQLYIESMARSSVKPVAETCVEPQGGDEQKDFSSSQTLKNKSTTDTGSGGNLQQEQPSSSYQQMNCIDSVIRYLTSYSLPALKRKCISCTNTSSSSEEAKPIPEVDSSQRDTEQLLDIRKQETTGPSTDIEGGAARTLSTAALSVASGISQCSCSSTSGHAPPLQSESVAVACKPWALRTKASHLAAGGFKHVGLTAAVLSAHTQKEEQNYVDRFREKILTSPYGCYLQQESRNRAQYSCVQAGSTAKHSRCAGSERQKHKRKKLPAPVDTSSPGAHLCPHVTGLLPDEQHWGPSASPSPLGAGLAFPSALVVPSQTPYLLPSFPLQDMASQGVGVSAAWGAAAGCPPLSAGPQAVAAFPSAYVDTLMTIFLHNAPLFPLWPPSFSPYPSLGAAGSSELAPLVPAMAPNPEPTTSGHSQRRVEENWEAHSEELPFISSRSSSPLQLNLLQEEMPAPSESADAVRRGAGPDAKHHCVTGPSGSRSRHCTSGELATATAQQESAAASGSSASSIYFSSTDYASEVSENRQRPQDRQRDEALPGAAEESIWRMIERTPECVLMTYQVPERGREEVLKQDLEKLQSMEQQQPLFSPAQREELAKVRSWIHSHTAPQEGHLQSCVACEDRGSVGDTAEVLEQHPAEDTS</sequence>
<name>PER3_MOUSE</name>
<protein>
    <recommendedName>
        <fullName>Period circadian protein homolog 3</fullName>
        <shortName>mPER3</shortName>
    </recommendedName>
    <alternativeName>
        <fullName>Circadian clock protein PERIOD 3</fullName>
    </alternativeName>
</protein>
<gene>
    <name type="primary">Per3</name>
</gene>